<reference key="1">
    <citation type="journal article" date="2003" name="Science">
        <title>Role of mobile DNA in the evolution of vancomycin-resistant Enterococcus faecalis.</title>
        <authorList>
            <person name="Paulsen I.T."/>
            <person name="Banerjei L."/>
            <person name="Myers G.S.A."/>
            <person name="Nelson K.E."/>
            <person name="Seshadri R."/>
            <person name="Read T.D."/>
            <person name="Fouts D.E."/>
            <person name="Eisen J.A."/>
            <person name="Gill S.R."/>
            <person name="Heidelberg J.F."/>
            <person name="Tettelin H."/>
            <person name="Dodson R.J."/>
            <person name="Umayam L.A."/>
            <person name="Brinkac L.M."/>
            <person name="Beanan M.J."/>
            <person name="Daugherty S.C."/>
            <person name="DeBoy R.T."/>
            <person name="Durkin S.A."/>
            <person name="Kolonay J.F."/>
            <person name="Madupu R."/>
            <person name="Nelson W.C."/>
            <person name="Vamathevan J.J."/>
            <person name="Tran B."/>
            <person name="Upton J."/>
            <person name="Hansen T."/>
            <person name="Shetty J."/>
            <person name="Khouri H.M."/>
            <person name="Utterback T.R."/>
            <person name="Radune D."/>
            <person name="Ketchum K.A."/>
            <person name="Dougherty B.A."/>
            <person name="Fraser C.M."/>
        </authorList>
    </citation>
    <scope>NUCLEOTIDE SEQUENCE [LARGE SCALE GENOMIC DNA]</scope>
    <source>
        <strain>ATCC 700802 / V583</strain>
    </source>
</reference>
<keyword id="KW-0021">Allosteric enzyme</keyword>
<keyword id="KW-0067">ATP-binding</keyword>
<keyword id="KW-0963">Cytoplasm</keyword>
<keyword id="KW-0324">Glycolysis</keyword>
<keyword id="KW-0418">Kinase</keyword>
<keyword id="KW-0460">Magnesium</keyword>
<keyword id="KW-0479">Metal-binding</keyword>
<keyword id="KW-0547">Nucleotide-binding</keyword>
<keyword id="KW-1185">Reference proteome</keyword>
<keyword id="KW-0808">Transferase</keyword>
<organism>
    <name type="scientific">Enterococcus faecalis (strain ATCC 700802 / V583)</name>
    <dbReference type="NCBI Taxonomy" id="226185"/>
    <lineage>
        <taxon>Bacteria</taxon>
        <taxon>Bacillati</taxon>
        <taxon>Bacillota</taxon>
        <taxon>Bacilli</taxon>
        <taxon>Lactobacillales</taxon>
        <taxon>Enterococcaceae</taxon>
        <taxon>Enterococcus</taxon>
    </lineage>
</organism>
<accession>Q836R3</accession>
<dbReference type="EC" id="2.7.1.11" evidence="1"/>
<dbReference type="EMBL" id="AE016830">
    <property type="protein sequence ID" value="AAO80848.1"/>
    <property type="molecule type" value="Genomic_DNA"/>
</dbReference>
<dbReference type="RefSeq" id="NP_814778.1">
    <property type="nucleotide sequence ID" value="NC_004668.1"/>
</dbReference>
<dbReference type="RefSeq" id="WP_002355947.1">
    <property type="nucleotide sequence ID" value="NZ_KE136527.1"/>
</dbReference>
<dbReference type="SMR" id="Q836R3"/>
<dbReference type="STRING" id="226185.EF_1045"/>
<dbReference type="EnsemblBacteria" id="AAO80848">
    <property type="protein sequence ID" value="AAO80848"/>
    <property type="gene ID" value="EF_1045"/>
</dbReference>
<dbReference type="GeneID" id="60893430"/>
<dbReference type="KEGG" id="efa:EF1045"/>
<dbReference type="PATRIC" id="fig|226185.45.peg.3250"/>
<dbReference type="eggNOG" id="COG0205">
    <property type="taxonomic scope" value="Bacteria"/>
</dbReference>
<dbReference type="HOGENOM" id="CLU_020655_0_1_9"/>
<dbReference type="UniPathway" id="UPA00109">
    <property type="reaction ID" value="UER00182"/>
</dbReference>
<dbReference type="Proteomes" id="UP000001415">
    <property type="component" value="Chromosome"/>
</dbReference>
<dbReference type="GO" id="GO:0005945">
    <property type="term" value="C:6-phosphofructokinase complex"/>
    <property type="evidence" value="ECO:0007669"/>
    <property type="project" value="TreeGrafter"/>
</dbReference>
<dbReference type="GO" id="GO:0003872">
    <property type="term" value="F:6-phosphofructokinase activity"/>
    <property type="evidence" value="ECO:0007669"/>
    <property type="project" value="UniProtKB-UniRule"/>
</dbReference>
<dbReference type="GO" id="GO:0016208">
    <property type="term" value="F:AMP binding"/>
    <property type="evidence" value="ECO:0007669"/>
    <property type="project" value="TreeGrafter"/>
</dbReference>
<dbReference type="GO" id="GO:0005524">
    <property type="term" value="F:ATP binding"/>
    <property type="evidence" value="ECO:0007669"/>
    <property type="project" value="UniProtKB-KW"/>
</dbReference>
<dbReference type="GO" id="GO:0070095">
    <property type="term" value="F:fructose-6-phosphate binding"/>
    <property type="evidence" value="ECO:0007669"/>
    <property type="project" value="TreeGrafter"/>
</dbReference>
<dbReference type="GO" id="GO:0042802">
    <property type="term" value="F:identical protein binding"/>
    <property type="evidence" value="ECO:0007669"/>
    <property type="project" value="TreeGrafter"/>
</dbReference>
<dbReference type="GO" id="GO:0046872">
    <property type="term" value="F:metal ion binding"/>
    <property type="evidence" value="ECO:0007669"/>
    <property type="project" value="UniProtKB-KW"/>
</dbReference>
<dbReference type="GO" id="GO:0048029">
    <property type="term" value="F:monosaccharide binding"/>
    <property type="evidence" value="ECO:0007669"/>
    <property type="project" value="TreeGrafter"/>
</dbReference>
<dbReference type="GO" id="GO:0061621">
    <property type="term" value="P:canonical glycolysis"/>
    <property type="evidence" value="ECO:0007669"/>
    <property type="project" value="TreeGrafter"/>
</dbReference>
<dbReference type="GO" id="GO:0030388">
    <property type="term" value="P:fructose 1,6-bisphosphate metabolic process"/>
    <property type="evidence" value="ECO:0007669"/>
    <property type="project" value="TreeGrafter"/>
</dbReference>
<dbReference type="GO" id="GO:0006002">
    <property type="term" value="P:fructose 6-phosphate metabolic process"/>
    <property type="evidence" value="ECO:0007669"/>
    <property type="project" value="InterPro"/>
</dbReference>
<dbReference type="FunFam" id="3.40.50.450:FF:000001">
    <property type="entry name" value="ATP-dependent 6-phosphofructokinase"/>
    <property type="match status" value="1"/>
</dbReference>
<dbReference type="FunFam" id="3.40.50.460:FF:000002">
    <property type="entry name" value="ATP-dependent 6-phosphofructokinase"/>
    <property type="match status" value="1"/>
</dbReference>
<dbReference type="Gene3D" id="3.40.50.450">
    <property type="match status" value="1"/>
</dbReference>
<dbReference type="Gene3D" id="3.40.50.460">
    <property type="entry name" value="Phosphofructokinase domain"/>
    <property type="match status" value="1"/>
</dbReference>
<dbReference type="HAMAP" id="MF_00339">
    <property type="entry name" value="Phosphofructokinase_I_B1"/>
    <property type="match status" value="1"/>
</dbReference>
<dbReference type="InterPro" id="IPR022953">
    <property type="entry name" value="ATP_PFK"/>
</dbReference>
<dbReference type="InterPro" id="IPR012003">
    <property type="entry name" value="ATP_PFK_prok-type"/>
</dbReference>
<dbReference type="InterPro" id="IPR012828">
    <property type="entry name" value="PFKA_ATP_prok"/>
</dbReference>
<dbReference type="InterPro" id="IPR000023">
    <property type="entry name" value="Phosphofructokinase_dom"/>
</dbReference>
<dbReference type="InterPro" id="IPR035966">
    <property type="entry name" value="PKF_sf"/>
</dbReference>
<dbReference type="NCBIfam" id="TIGR02482">
    <property type="entry name" value="PFKA_ATP"/>
    <property type="match status" value="1"/>
</dbReference>
<dbReference type="NCBIfam" id="NF002872">
    <property type="entry name" value="PRK03202.1"/>
    <property type="match status" value="1"/>
</dbReference>
<dbReference type="PANTHER" id="PTHR13697:SF4">
    <property type="entry name" value="ATP-DEPENDENT 6-PHOSPHOFRUCTOKINASE"/>
    <property type="match status" value="1"/>
</dbReference>
<dbReference type="PANTHER" id="PTHR13697">
    <property type="entry name" value="PHOSPHOFRUCTOKINASE"/>
    <property type="match status" value="1"/>
</dbReference>
<dbReference type="Pfam" id="PF00365">
    <property type="entry name" value="PFK"/>
    <property type="match status" value="1"/>
</dbReference>
<dbReference type="PIRSF" id="PIRSF000532">
    <property type="entry name" value="ATP_PFK_prok"/>
    <property type="match status" value="1"/>
</dbReference>
<dbReference type="PRINTS" id="PR00476">
    <property type="entry name" value="PHFRCTKINASE"/>
</dbReference>
<dbReference type="SUPFAM" id="SSF53784">
    <property type="entry name" value="Phosphofructokinase"/>
    <property type="match status" value="1"/>
</dbReference>
<sequence>MKRIGILTSGGDAPGMNAAIRAVVRKSIFDGIEVYGINYGFAGLVAGDIRRLDVADVGDKIQRGGTFLYSARYPEFATEEGQLKGIEQLKKFGIEGLVVIGGDGSYHGAMALTKRGFPAVGIPGTIDNDIPGTDFTIGFDTAINTVLESIDRIRDTATSHVRTFVIEVMGRNAGDIALWSGVAGGADEIIIPEHDFDMKNVAKRIQEGRDRGKKHCLIILAEGVMGGNEFADKLSEYGDFHTRVSILGHVVRGGSPSARDRVLASKFGSYAVELLKEGKGGLCIGMLDNQVVAADIIDTLENNKHKPDLSLYELNHEISF</sequence>
<protein>
    <recommendedName>
        <fullName evidence="1">ATP-dependent 6-phosphofructokinase</fullName>
        <shortName evidence="1">ATP-PFK</shortName>
        <shortName evidence="1">Phosphofructokinase</shortName>
        <ecNumber evidence="1">2.7.1.11</ecNumber>
    </recommendedName>
    <alternativeName>
        <fullName evidence="1">Phosphohexokinase</fullName>
    </alternativeName>
</protein>
<evidence type="ECO:0000255" key="1">
    <source>
        <dbReference type="HAMAP-Rule" id="MF_00339"/>
    </source>
</evidence>
<gene>
    <name evidence="1" type="primary">pfkA</name>
    <name type="ordered locus">EF_1045</name>
</gene>
<comment type="function">
    <text evidence="1">Catalyzes the phosphorylation of D-fructose 6-phosphate to fructose 1,6-bisphosphate by ATP, the first committing step of glycolysis.</text>
</comment>
<comment type="catalytic activity">
    <reaction evidence="1">
        <text>beta-D-fructose 6-phosphate + ATP = beta-D-fructose 1,6-bisphosphate + ADP + H(+)</text>
        <dbReference type="Rhea" id="RHEA:16109"/>
        <dbReference type="ChEBI" id="CHEBI:15378"/>
        <dbReference type="ChEBI" id="CHEBI:30616"/>
        <dbReference type="ChEBI" id="CHEBI:32966"/>
        <dbReference type="ChEBI" id="CHEBI:57634"/>
        <dbReference type="ChEBI" id="CHEBI:456216"/>
        <dbReference type="EC" id="2.7.1.11"/>
    </reaction>
</comment>
<comment type="cofactor">
    <cofactor evidence="1">
        <name>Mg(2+)</name>
        <dbReference type="ChEBI" id="CHEBI:18420"/>
    </cofactor>
</comment>
<comment type="activity regulation">
    <text evidence="1">Allosterically activated by ADP and other diphosphonucleosides, and allosterically inhibited by phosphoenolpyruvate.</text>
</comment>
<comment type="pathway">
    <text evidence="1">Carbohydrate degradation; glycolysis; D-glyceraldehyde 3-phosphate and glycerone phosphate from D-glucose: step 3/4.</text>
</comment>
<comment type="subunit">
    <text evidence="1">Homotetramer.</text>
</comment>
<comment type="subcellular location">
    <subcellularLocation>
        <location evidence="1">Cytoplasm</location>
    </subcellularLocation>
</comment>
<comment type="similarity">
    <text evidence="1">Belongs to the phosphofructokinase type A (PFKA) family. ATP-dependent PFK group I subfamily. Prokaryotic clade 'B1' sub-subfamily.</text>
</comment>
<proteinExistence type="inferred from homology"/>
<feature type="chain" id="PRO_1000059761" description="ATP-dependent 6-phosphofructokinase">
    <location>
        <begin position="1"/>
        <end position="320"/>
    </location>
</feature>
<feature type="active site" description="Proton acceptor" evidence="1">
    <location>
        <position position="127"/>
    </location>
</feature>
<feature type="binding site" evidence="1">
    <location>
        <position position="11"/>
    </location>
    <ligand>
        <name>ATP</name>
        <dbReference type="ChEBI" id="CHEBI:30616"/>
    </ligand>
</feature>
<feature type="binding site" evidence="1">
    <location>
        <begin position="21"/>
        <end position="25"/>
    </location>
    <ligand>
        <name>ADP</name>
        <dbReference type="ChEBI" id="CHEBI:456216"/>
        <note>allosteric activator; ligand shared between dimeric partners</note>
    </ligand>
</feature>
<feature type="binding site" evidence="1">
    <location>
        <begin position="72"/>
        <end position="73"/>
    </location>
    <ligand>
        <name>ATP</name>
        <dbReference type="ChEBI" id="CHEBI:30616"/>
    </ligand>
</feature>
<feature type="binding site" evidence="1">
    <location>
        <begin position="102"/>
        <end position="105"/>
    </location>
    <ligand>
        <name>ATP</name>
        <dbReference type="ChEBI" id="CHEBI:30616"/>
    </ligand>
</feature>
<feature type="binding site" evidence="1">
    <location>
        <position position="103"/>
    </location>
    <ligand>
        <name>Mg(2+)</name>
        <dbReference type="ChEBI" id="CHEBI:18420"/>
        <note>catalytic</note>
    </ligand>
</feature>
<feature type="binding site" description="in other chain" evidence="1">
    <location>
        <begin position="125"/>
        <end position="127"/>
    </location>
    <ligand>
        <name>substrate</name>
        <note>ligand shared between dimeric partners</note>
    </ligand>
</feature>
<feature type="binding site" description="in other chain" evidence="1">
    <location>
        <position position="154"/>
    </location>
    <ligand>
        <name>ADP</name>
        <dbReference type="ChEBI" id="CHEBI:456216"/>
        <note>allosteric activator; ligand shared between dimeric partners</note>
    </ligand>
</feature>
<feature type="binding site" evidence="1">
    <location>
        <position position="162"/>
    </location>
    <ligand>
        <name>substrate</name>
        <note>ligand shared between dimeric partners</note>
    </ligand>
</feature>
<feature type="binding site" description="in other chain" evidence="1">
    <location>
        <begin position="169"/>
        <end position="171"/>
    </location>
    <ligand>
        <name>substrate</name>
        <note>ligand shared between dimeric partners</note>
    </ligand>
</feature>
<feature type="binding site" description="in other chain" evidence="1">
    <location>
        <begin position="185"/>
        <end position="187"/>
    </location>
    <ligand>
        <name>ADP</name>
        <dbReference type="ChEBI" id="CHEBI:456216"/>
        <note>allosteric activator; ligand shared between dimeric partners</note>
    </ligand>
</feature>
<feature type="binding site" description="in other chain" evidence="1">
    <location>
        <position position="211"/>
    </location>
    <ligand>
        <name>ADP</name>
        <dbReference type="ChEBI" id="CHEBI:456216"/>
        <note>allosteric activator; ligand shared between dimeric partners</note>
    </ligand>
</feature>
<feature type="binding site" description="in other chain" evidence="1">
    <location>
        <begin position="213"/>
        <end position="215"/>
    </location>
    <ligand>
        <name>ADP</name>
        <dbReference type="ChEBI" id="CHEBI:456216"/>
        <note>allosteric activator; ligand shared between dimeric partners</note>
    </ligand>
</feature>
<feature type="binding site" description="in other chain" evidence="1">
    <location>
        <position position="222"/>
    </location>
    <ligand>
        <name>substrate</name>
        <note>ligand shared between dimeric partners</note>
    </ligand>
</feature>
<feature type="binding site" evidence="1">
    <location>
        <position position="243"/>
    </location>
    <ligand>
        <name>substrate</name>
        <note>ligand shared between dimeric partners</note>
    </ligand>
</feature>
<feature type="binding site" description="in other chain" evidence="1">
    <location>
        <begin position="249"/>
        <end position="252"/>
    </location>
    <ligand>
        <name>substrate</name>
        <note>ligand shared between dimeric partners</note>
    </ligand>
</feature>
<name>PFKA_ENTFA</name>